<gene>
    <name evidence="1" type="primary">argC</name>
    <name type="ordered locus">c4917</name>
</gene>
<dbReference type="EC" id="1.2.1.38" evidence="1"/>
<dbReference type="EMBL" id="AE014075">
    <property type="protein sequence ID" value="AAN83345.1"/>
    <property type="molecule type" value="Genomic_DNA"/>
</dbReference>
<dbReference type="RefSeq" id="WP_000935379.1">
    <property type="nucleotide sequence ID" value="NZ_CP051263.1"/>
</dbReference>
<dbReference type="SMR" id="P59306"/>
<dbReference type="STRING" id="199310.c4917"/>
<dbReference type="KEGG" id="ecc:c4917"/>
<dbReference type="eggNOG" id="COG0002">
    <property type="taxonomic scope" value="Bacteria"/>
</dbReference>
<dbReference type="HOGENOM" id="CLU_006384_0_1_6"/>
<dbReference type="BioCyc" id="ECOL199310:C4917-MONOMER"/>
<dbReference type="UniPathway" id="UPA00068">
    <property type="reaction ID" value="UER00108"/>
</dbReference>
<dbReference type="Proteomes" id="UP000001410">
    <property type="component" value="Chromosome"/>
</dbReference>
<dbReference type="GO" id="GO:0005737">
    <property type="term" value="C:cytoplasm"/>
    <property type="evidence" value="ECO:0007669"/>
    <property type="project" value="UniProtKB-SubCell"/>
</dbReference>
<dbReference type="GO" id="GO:0003942">
    <property type="term" value="F:N-acetyl-gamma-glutamyl-phosphate reductase activity"/>
    <property type="evidence" value="ECO:0007669"/>
    <property type="project" value="UniProtKB-UniRule"/>
</dbReference>
<dbReference type="GO" id="GO:0051287">
    <property type="term" value="F:NAD binding"/>
    <property type="evidence" value="ECO:0007669"/>
    <property type="project" value="InterPro"/>
</dbReference>
<dbReference type="GO" id="GO:0070401">
    <property type="term" value="F:NADP+ binding"/>
    <property type="evidence" value="ECO:0007669"/>
    <property type="project" value="InterPro"/>
</dbReference>
<dbReference type="GO" id="GO:0006526">
    <property type="term" value="P:L-arginine biosynthetic process"/>
    <property type="evidence" value="ECO:0007669"/>
    <property type="project" value="UniProtKB-UniRule"/>
</dbReference>
<dbReference type="CDD" id="cd23934">
    <property type="entry name" value="AGPR_1_C"/>
    <property type="match status" value="1"/>
</dbReference>
<dbReference type="CDD" id="cd17895">
    <property type="entry name" value="AGPR_1_N"/>
    <property type="match status" value="1"/>
</dbReference>
<dbReference type="FunFam" id="3.30.360.10:FF:000014">
    <property type="entry name" value="N-acetyl-gamma-glutamyl-phosphate reductase"/>
    <property type="match status" value="1"/>
</dbReference>
<dbReference type="FunFam" id="3.40.50.720:FF:000117">
    <property type="entry name" value="N-acetyl-gamma-glutamyl-phosphate reductase"/>
    <property type="match status" value="1"/>
</dbReference>
<dbReference type="Gene3D" id="3.30.360.10">
    <property type="entry name" value="Dihydrodipicolinate Reductase, domain 2"/>
    <property type="match status" value="1"/>
</dbReference>
<dbReference type="Gene3D" id="3.40.50.720">
    <property type="entry name" value="NAD(P)-binding Rossmann-like Domain"/>
    <property type="match status" value="1"/>
</dbReference>
<dbReference type="HAMAP" id="MF_00150">
    <property type="entry name" value="ArgC_type1"/>
    <property type="match status" value="1"/>
</dbReference>
<dbReference type="InterPro" id="IPR023013">
    <property type="entry name" value="AGPR_AS"/>
</dbReference>
<dbReference type="InterPro" id="IPR000706">
    <property type="entry name" value="AGPR_type-1"/>
</dbReference>
<dbReference type="InterPro" id="IPR036291">
    <property type="entry name" value="NAD(P)-bd_dom_sf"/>
</dbReference>
<dbReference type="InterPro" id="IPR050085">
    <property type="entry name" value="NAGSA_dehydrogenase"/>
</dbReference>
<dbReference type="InterPro" id="IPR000534">
    <property type="entry name" value="Semialdehyde_DH_NAD-bd"/>
</dbReference>
<dbReference type="NCBIfam" id="TIGR01850">
    <property type="entry name" value="argC"/>
    <property type="match status" value="1"/>
</dbReference>
<dbReference type="PANTHER" id="PTHR32338:SF10">
    <property type="entry name" value="N-ACETYL-GAMMA-GLUTAMYL-PHOSPHATE REDUCTASE, CHLOROPLASTIC-RELATED"/>
    <property type="match status" value="1"/>
</dbReference>
<dbReference type="PANTHER" id="PTHR32338">
    <property type="entry name" value="N-ACETYL-GAMMA-GLUTAMYL-PHOSPHATE REDUCTASE, CHLOROPLASTIC-RELATED-RELATED"/>
    <property type="match status" value="1"/>
</dbReference>
<dbReference type="Pfam" id="PF01118">
    <property type="entry name" value="Semialdhyde_dh"/>
    <property type="match status" value="1"/>
</dbReference>
<dbReference type="Pfam" id="PF22698">
    <property type="entry name" value="Semialdhyde_dhC_1"/>
    <property type="match status" value="1"/>
</dbReference>
<dbReference type="SMART" id="SM00859">
    <property type="entry name" value="Semialdhyde_dh"/>
    <property type="match status" value="1"/>
</dbReference>
<dbReference type="SUPFAM" id="SSF55347">
    <property type="entry name" value="Glyceraldehyde-3-phosphate dehydrogenase-like, C-terminal domain"/>
    <property type="match status" value="1"/>
</dbReference>
<dbReference type="SUPFAM" id="SSF51735">
    <property type="entry name" value="NAD(P)-binding Rossmann-fold domains"/>
    <property type="match status" value="1"/>
</dbReference>
<dbReference type="PROSITE" id="PS01224">
    <property type="entry name" value="ARGC"/>
    <property type="match status" value="1"/>
</dbReference>
<evidence type="ECO:0000255" key="1">
    <source>
        <dbReference type="HAMAP-Rule" id="MF_00150"/>
    </source>
</evidence>
<protein>
    <recommendedName>
        <fullName evidence="1">N-acetyl-gamma-glutamyl-phosphate reductase</fullName>
        <shortName evidence="1">AGPR</shortName>
        <ecNumber evidence="1">1.2.1.38</ecNumber>
    </recommendedName>
    <alternativeName>
        <fullName evidence="1">N-acetyl-glutamate semialdehyde dehydrogenase</fullName>
        <shortName evidence="1">NAGSA dehydrogenase</shortName>
    </alternativeName>
</protein>
<accession>P59306</accession>
<name>ARGC_ECOL6</name>
<feature type="chain" id="PRO_0000112402" description="N-acetyl-gamma-glutamyl-phosphate reductase">
    <location>
        <begin position="1"/>
        <end position="334"/>
    </location>
</feature>
<feature type="active site" evidence="1">
    <location>
        <position position="154"/>
    </location>
</feature>
<proteinExistence type="inferred from homology"/>
<comment type="function">
    <text evidence="1">Catalyzes the NADPH-dependent reduction of N-acetyl-5-glutamyl phosphate to yield N-acetyl-L-glutamate 5-semialdehyde.</text>
</comment>
<comment type="catalytic activity">
    <reaction evidence="1">
        <text>N-acetyl-L-glutamate 5-semialdehyde + phosphate + NADP(+) = N-acetyl-L-glutamyl 5-phosphate + NADPH + H(+)</text>
        <dbReference type="Rhea" id="RHEA:21588"/>
        <dbReference type="ChEBI" id="CHEBI:15378"/>
        <dbReference type="ChEBI" id="CHEBI:29123"/>
        <dbReference type="ChEBI" id="CHEBI:43474"/>
        <dbReference type="ChEBI" id="CHEBI:57783"/>
        <dbReference type="ChEBI" id="CHEBI:57936"/>
        <dbReference type="ChEBI" id="CHEBI:58349"/>
        <dbReference type="EC" id="1.2.1.38"/>
    </reaction>
</comment>
<comment type="pathway">
    <text evidence="1">Amino-acid biosynthesis; L-arginine biosynthesis; N(2)-acetyl-L-ornithine from L-glutamate: step 3/4.</text>
</comment>
<comment type="subcellular location">
    <subcellularLocation>
        <location evidence="1">Cytoplasm</location>
    </subcellularLocation>
</comment>
<comment type="similarity">
    <text evidence="1">Belongs to the NAGSA dehydrogenase family. Type 1 subfamily.</text>
</comment>
<sequence>MLNTLIVGASGYAGAELVTYVNRHPHMNITALTVSAQSNDAGKLISDLHPQLKGIVDLPLQPMSDISEFSPGVDVVFLATAHEVSHDLAPQFLEAGCVVFDLSGAFRVNDVAFYEKYYGFTHQYPELLEQAAYGLAEWCGNKLKEANLIAVPGCYPTAAQLALKPLIDADLLDLNQWPVINATSGVSGAGRKAAISNSFCEVSLQPYGVFTHRHQPEIATHLGADVIFTPHLGNFPRGILETITCRLKPGVSQVQVAQALQQAYAHKPLVRLYDKGVPALKNVVGLPFCDIGFAVQGEHLIIVATEDNLLKGAAAQAVQCANIRFGYAETQSLI</sequence>
<organism>
    <name type="scientific">Escherichia coli O6:H1 (strain CFT073 / ATCC 700928 / UPEC)</name>
    <dbReference type="NCBI Taxonomy" id="199310"/>
    <lineage>
        <taxon>Bacteria</taxon>
        <taxon>Pseudomonadati</taxon>
        <taxon>Pseudomonadota</taxon>
        <taxon>Gammaproteobacteria</taxon>
        <taxon>Enterobacterales</taxon>
        <taxon>Enterobacteriaceae</taxon>
        <taxon>Escherichia</taxon>
    </lineage>
</organism>
<reference key="1">
    <citation type="journal article" date="2002" name="Proc. Natl. Acad. Sci. U.S.A.">
        <title>Extensive mosaic structure revealed by the complete genome sequence of uropathogenic Escherichia coli.</title>
        <authorList>
            <person name="Welch R.A."/>
            <person name="Burland V."/>
            <person name="Plunkett G. III"/>
            <person name="Redford P."/>
            <person name="Roesch P."/>
            <person name="Rasko D."/>
            <person name="Buckles E.L."/>
            <person name="Liou S.-R."/>
            <person name="Boutin A."/>
            <person name="Hackett J."/>
            <person name="Stroud D."/>
            <person name="Mayhew G.F."/>
            <person name="Rose D.J."/>
            <person name="Zhou S."/>
            <person name="Schwartz D.C."/>
            <person name="Perna N.T."/>
            <person name="Mobley H.L.T."/>
            <person name="Donnenberg M.S."/>
            <person name="Blattner F.R."/>
        </authorList>
    </citation>
    <scope>NUCLEOTIDE SEQUENCE [LARGE SCALE GENOMIC DNA]</scope>
    <source>
        <strain>CFT073 / ATCC 700928 / UPEC</strain>
    </source>
</reference>
<keyword id="KW-0028">Amino-acid biosynthesis</keyword>
<keyword id="KW-0055">Arginine biosynthesis</keyword>
<keyword id="KW-0963">Cytoplasm</keyword>
<keyword id="KW-0521">NADP</keyword>
<keyword id="KW-0560">Oxidoreductase</keyword>
<keyword id="KW-1185">Reference proteome</keyword>